<comment type="function">
    <text evidence="1">Activator of cell division through the inhibition of FtsZ GTPase activity, therefore promoting FtsZ assembly into bundles of protofilaments necessary for the formation of the division Z ring. It is recruited early at mid-cell but it is not essential for cell division.</text>
</comment>
<comment type="subunit">
    <text evidence="1">Homodimer. Interacts with FtsZ.</text>
</comment>
<comment type="subcellular location">
    <subcellularLocation>
        <location evidence="1">Cytoplasm</location>
    </subcellularLocation>
    <text evidence="1">Localizes at mid-cell.</text>
</comment>
<comment type="similarity">
    <text evidence="1">Belongs to the ZapA family. Type 1 subfamily.</text>
</comment>
<evidence type="ECO:0000255" key="1">
    <source>
        <dbReference type="HAMAP-Rule" id="MF_02012"/>
    </source>
</evidence>
<organism>
    <name type="scientific">Shigella flexneri serotype 5b (strain 8401)</name>
    <dbReference type="NCBI Taxonomy" id="373384"/>
    <lineage>
        <taxon>Bacteria</taxon>
        <taxon>Pseudomonadati</taxon>
        <taxon>Pseudomonadota</taxon>
        <taxon>Gammaproteobacteria</taxon>
        <taxon>Enterobacterales</taxon>
        <taxon>Enterobacteriaceae</taxon>
        <taxon>Shigella</taxon>
    </lineage>
</organism>
<keyword id="KW-0131">Cell cycle</keyword>
<keyword id="KW-0132">Cell division</keyword>
<keyword id="KW-0175">Coiled coil</keyword>
<keyword id="KW-0963">Cytoplasm</keyword>
<keyword id="KW-0717">Septation</keyword>
<proteinExistence type="inferred from homology"/>
<reference key="1">
    <citation type="journal article" date="2006" name="BMC Genomics">
        <title>Complete genome sequence of Shigella flexneri 5b and comparison with Shigella flexneri 2a.</title>
        <authorList>
            <person name="Nie H."/>
            <person name="Yang F."/>
            <person name="Zhang X."/>
            <person name="Yang J."/>
            <person name="Chen L."/>
            <person name="Wang J."/>
            <person name="Xiong Z."/>
            <person name="Peng J."/>
            <person name="Sun L."/>
            <person name="Dong J."/>
            <person name="Xue Y."/>
            <person name="Xu X."/>
            <person name="Chen S."/>
            <person name="Yao Z."/>
            <person name="Shen Y."/>
            <person name="Jin Q."/>
        </authorList>
    </citation>
    <scope>NUCLEOTIDE SEQUENCE [LARGE SCALE GENOMIC DNA]</scope>
    <source>
        <strain>8401</strain>
    </source>
</reference>
<name>ZAPA_SHIF8</name>
<accession>Q0T0Y8</accession>
<dbReference type="EMBL" id="CP000266">
    <property type="protein sequence ID" value="ABF05027.1"/>
    <property type="molecule type" value="Genomic_DNA"/>
</dbReference>
<dbReference type="RefSeq" id="WP_001276008.1">
    <property type="nucleotide sequence ID" value="NC_008258.1"/>
</dbReference>
<dbReference type="SMR" id="Q0T0Y8"/>
<dbReference type="GeneID" id="93779091"/>
<dbReference type="KEGG" id="sfv:SFV_2958"/>
<dbReference type="HOGENOM" id="CLU_116623_3_0_6"/>
<dbReference type="Proteomes" id="UP000000659">
    <property type="component" value="Chromosome"/>
</dbReference>
<dbReference type="GO" id="GO:0032153">
    <property type="term" value="C:cell division site"/>
    <property type="evidence" value="ECO:0007669"/>
    <property type="project" value="TreeGrafter"/>
</dbReference>
<dbReference type="GO" id="GO:0030428">
    <property type="term" value="C:cell septum"/>
    <property type="evidence" value="ECO:0007669"/>
    <property type="project" value="TreeGrafter"/>
</dbReference>
<dbReference type="GO" id="GO:0005829">
    <property type="term" value="C:cytosol"/>
    <property type="evidence" value="ECO:0007669"/>
    <property type="project" value="TreeGrafter"/>
</dbReference>
<dbReference type="GO" id="GO:0005886">
    <property type="term" value="C:plasma membrane"/>
    <property type="evidence" value="ECO:0007669"/>
    <property type="project" value="UniProtKB-UniRule"/>
</dbReference>
<dbReference type="GO" id="GO:0000917">
    <property type="term" value="P:division septum assembly"/>
    <property type="evidence" value="ECO:0007669"/>
    <property type="project" value="UniProtKB-KW"/>
</dbReference>
<dbReference type="GO" id="GO:0043093">
    <property type="term" value="P:FtsZ-dependent cytokinesis"/>
    <property type="evidence" value="ECO:0007669"/>
    <property type="project" value="TreeGrafter"/>
</dbReference>
<dbReference type="GO" id="GO:0000921">
    <property type="term" value="P:septin ring assembly"/>
    <property type="evidence" value="ECO:0007669"/>
    <property type="project" value="TreeGrafter"/>
</dbReference>
<dbReference type="FunFam" id="1.20.5.50:FF:000001">
    <property type="entry name" value="Cell division protein ZapA"/>
    <property type="match status" value="1"/>
</dbReference>
<dbReference type="FunFam" id="3.30.160.880:FF:000001">
    <property type="entry name" value="Cell division protein ZapA"/>
    <property type="match status" value="1"/>
</dbReference>
<dbReference type="Gene3D" id="1.20.5.50">
    <property type="match status" value="1"/>
</dbReference>
<dbReference type="Gene3D" id="3.30.160.880">
    <property type="entry name" value="Cell division protein ZapA protomer, N-terminal domain"/>
    <property type="match status" value="1"/>
</dbReference>
<dbReference type="HAMAP" id="MF_02012">
    <property type="entry name" value="ZapA_type1"/>
    <property type="match status" value="1"/>
</dbReference>
<dbReference type="InterPro" id="IPR007838">
    <property type="entry name" value="Cell_div_ZapA-like"/>
</dbReference>
<dbReference type="InterPro" id="IPR036192">
    <property type="entry name" value="Cell_div_ZapA-like_sf"/>
</dbReference>
<dbReference type="InterPro" id="IPR023771">
    <property type="entry name" value="Cell_div_ZapA_eubact"/>
</dbReference>
<dbReference type="InterPro" id="IPR042233">
    <property type="entry name" value="Cell_div_ZapA_N"/>
</dbReference>
<dbReference type="NCBIfam" id="NF008209">
    <property type="entry name" value="PRK10972.1"/>
    <property type="match status" value="1"/>
</dbReference>
<dbReference type="PANTHER" id="PTHR34981">
    <property type="entry name" value="CELL DIVISION PROTEIN ZAPA"/>
    <property type="match status" value="1"/>
</dbReference>
<dbReference type="PANTHER" id="PTHR34981:SF1">
    <property type="entry name" value="CELL DIVISION PROTEIN ZAPA"/>
    <property type="match status" value="1"/>
</dbReference>
<dbReference type="Pfam" id="PF05164">
    <property type="entry name" value="ZapA"/>
    <property type="match status" value="1"/>
</dbReference>
<dbReference type="SUPFAM" id="SSF102829">
    <property type="entry name" value="Cell division protein ZapA-like"/>
    <property type="match status" value="1"/>
</dbReference>
<sequence>MSAQPVDIQIFGRSLRVNCPPDQRDALNQAADDLNQRLQDLKERTRVTNTEQLVFIAALNISYELAQEKAKTRDYAASMEQRIRMLQQTIEQALLEQGRITEKTNQNFE</sequence>
<feature type="chain" id="PRO_0000345662" description="Cell division protein ZapA">
    <location>
        <begin position="1"/>
        <end position="109"/>
    </location>
</feature>
<feature type="coiled-coil region" evidence="1">
    <location>
        <begin position="21"/>
        <end position="99"/>
    </location>
</feature>
<protein>
    <recommendedName>
        <fullName evidence="1">Cell division protein ZapA</fullName>
    </recommendedName>
    <alternativeName>
        <fullName evidence="1">Z ring-associated protein ZapA</fullName>
    </alternativeName>
</protein>
<gene>
    <name evidence="1" type="primary">zapA</name>
    <name type="ordered locus">SFV_2958</name>
</gene>